<accession>O55528</accession>
<accession>O55530</accession>
<protein>
    <recommendedName>
        <fullName>RNA-directed RNA polymerase L</fullName>
        <shortName>Protein L</shortName>
    </recommendedName>
    <alternativeName>
        <fullName>Large structural protein</fullName>
    </alternativeName>
    <alternativeName>
        <fullName>Replicase</fullName>
    </alternativeName>
    <alternativeName>
        <fullName>Transcriptase</fullName>
    </alternativeName>
    <domain>
        <recommendedName>
            <fullName>RNA-directed RNA polymerase</fullName>
            <ecNumber evidence="3">2.7.7.48</ecNumber>
        </recommendedName>
    </domain>
    <domain>
        <recommendedName>
            <fullName evidence="2">GTP phosphohydrolase</fullName>
            <ecNumber evidence="2">3.6.1.-</ecNumber>
        </recommendedName>
    </domain>
    <domain>
        <recommendedName>
            <fullName evidence="8">GDP polyribonucleotidyltransferase</fullName>
            <ecNumber evidence="2">2.7.7.88</ecNumber>
        </recommendedName>
        <alternativeName>
            <fullName evidence="8">PRNTase</fullName>
        </alternativeName>
    </domain>
    <domain>
        <recommendedName>
            <fullName evidence="8">mRNA cap methyltransferase</fullName>
            <ecNumber evidence="2">2.1.1.375</ecNumber>
        </recommendedName>
        <alternativeName>
            <fullName evidence="2">mRNA (guanine-N(7)-)-methyltransferase</fullName>
            <shortName evidence="2">G-N7-MTase</shortName>
        </alternativeName>
        <alternativeName>
            <fullName evidence="2">mRNA (nucleoside-2'-O-)-methyltransferase</fullName>
            <shortName evidence="2">N1-2'-O-MTase</shortName>
        </alternativeName>
    </domain>
</protein>
<reference key="1">
    <citation type="journal article" date="1997" name="J. Gen. Virol.">
        <title>Isolation of an avirulent mutant of Sendai virus with two amino acid mutations from a highly virulent field strain through adaptation to LLC-MK2 cells.</title>
        <authorList>
            <person name="Itoh M."/>
            <person name="Isegawa Y."/>
            <person name="Hotta H."/>
            <person name="Homma M."/>
        </authorList>
    </citation>
    <scope>NUCLEOTIDE SEQUENCE [GENOMIC RNA]</scope>
    <source>
        <strain>Isolate M1</strain>
        <strain>Isolate MVC11</strain>
    </source>
</reference>
<dbReference type="EC" id="2.7.7.48" evidence="3"/>
<dbReference type="EC" id="3.6.1.-" evidence="2"/>
<dbReference type="EC" id="2.7.7.88" evidence="2"/>
<dbReference type="EC" id="2.1.1.375" evidence="2"/>
<dbReference type="EMBL" id="AB005795">
    <property type="protein sequence ID" value="BAA24392.1"/>
    <property type="molecule type" value="Genomic_RNA"/>
</dbReference>
<dbReference type="EMBL" id="AB005796">
    <property type="protein sequence ID" value="BAA24401.1"/>
    <property type="molecule type" value="Genomic_RNA"/>
</dbReference>
<dbReference type="RefSeq" id="NP_056879.1">
    <property type="nucleotide sequence ID" value="NC_001552.1"/>
</dbReference>
<dbReference type="SMR" id="O55528"/>
<dbReference type="GeneID" id="1489777"/>
<dbReference type="KEGG" id="vg:1489777"/>
<dbReference type="Proteomes" id="UP000006563">
    <property type="component" value="Genome"/>
</dbReference>
<dbReference type="Proteomes" id="UP000007311">
    <property type="component" value="Segment"/>
</dbReference>
<dbReference type="GO" id="GO:0030430">
    <property type="term" value="C:host cell cytoplasm"/>
    <property type="evidence" value="ECO:0007669"/>
    <property type="project" value="UniProtKB-SubCell"/>
</dbReference>
<dbReference type="GO" id="GO:0044423">
    <property type="term" value="C:virion component"/>
    <property type="evidence" value="ECO:0007669"/>
    <property type="project" value="UniProtKB-KW"/>
</dbReference>
<dbReference type="GO" id="GO:0005524">
    <property type="term" value="F:ATP binding"/>
    <property type="evidence" value="ECO:0007669"/>
    <property type="project" value="UniProtKB-KW"/>
</dbReference>
<dbReference type="GO" id="GO:0003924">
    <property type="term" value="F:GTPase activity"/>
    <property type="evidence" value="ECO:0007669"/>
    <property type="project" value="RHEA"/>
</dbReference>
<dbReference type="GO" id="GO:0004482">
    <property type="term" value="F:mRNA 5'-cap (guanine-N7-)-methyltransferase activity"/>
    <property type="evidence" value="ECO:0007669"/>
    <property type="project" value="InterPro"/>
</dbReference>
<dbReference type="GO" id="GO:0003968">
    <property type="term" value="F:RNA-directed RNA polymerase activity"/>
    <property type="evidence" value="ECO:0007669"/>
    <property type="project" value="UniProtKB-KW"/>
</dbReference>
<dbReference type="GO" id="GO:0039689">
    <property type="term" value="P:negative stranded viral RNA replication"/>
    <property type="evidence" value="ECO:0000314"/>
    <property type="project" value="UniProtKB"/>
</dbReference>
<dbReference type="InterPro" id="IPR039736">
    <property type="entry name" value="L_poly_C"/>
</dbReference>
<dbReference type="InterPro" id="IPR026890">
    <property type="entry name" value="Mononeg_mRNAcap"/>
</dbReference>
<dbReference type="InterPro" id="IPR014023">
    <property type="entry name" value="Mononeg_RNA_pol_cat"/>
</dbReference>
<dbReference type="InterPro" id="IPR025786">
    <property type="entry name" value="Mononega_L_MeTrfase"/>
</dbReference>
<dbReference type="InterPro" id="IPR016269">
    <property type="entry name" value="RNA-dir_pol_paramyxovirus"/>
</dbReference>
<dbReference type="NCBIfam" id="TIGR04198">
    <property type="entry name" value="paramyx_RNAcap"/>
    <property type="match status" value="1"/>
</dbReference>
<dbReference type="Pfam" id="PF14318">
    <property type="entry name" value="Mononeg_mRNAcap"/>
    <property type="match status" value="1"/>
</dbReference>
<dbReference type="Pfam" id="PF00946">
    <property type="entry name" value="Mononeg_RNA_pol"/>
    <property type="match status" value="1"/>
</dbReference>
<dbReference type="PIRSF" id="PIRSF000830">
    <property type="entry name" value="RNA_pol_ParamyxoV"/>
    <property type="match status" value="1"/>
</dbReference>
<dbReference type="PROSITE" id="PS50526">
    <property type="entry name" value="RDRP_SSRNA_NEG_NONSEG"/>
    <property type="match status" value="1"/>
</dbReference>
<dbReference type="PROSITE" id="PS51590">
    <property type="entry name" value="SAM_MT_MNV_L"/>
    <property type="match status" value="1"/>
</dbReference>
<keyword id="KW-0067">ATP-binding</keyword>
<keyword id="KW-1035">Host cytoplasm</keyword>
<keyword id="KW-0378">Hydrolase</keyword>
<keyword id="KW-0489">Methyltransferase</keyword>
<keyword id="KW-0506">mRNA capping</keyword>
<keyword id="KW-0507">mRNA processing</keyword>
<keyword id="KW-0511">Multifunctional enzyme</keyword>
<keyword id="KW-0547">Nucleotide-binding</keyword>
<keyword id="KW-0548">Nucleotidyltransferase</keyword>
<keyword id="KW-1185">Reference proteome</keyword>
<keyword id="KW-0696">RNA-directed RNA polymerase</keyword>
<keyword id="KW-0949">S-adenosyl-L-methionine</keyword>
<keyword id="KW-0808">Transferase</keyword>
<keyword id="KW-0693">Viral RNA replication</keyword>
<keyword id="KW-0946">Virion</keyword>
<feature type="chain" id="PRO_0000142739" description="RNA-directed RNA polymerase L">
    <location>
        <begin position="1"/>
        <end position="2228"/>
    </location>
</feature>
<feature type="domain" description="RdRp catalytic" evidence="5">
    <location>
        <begin position="656"/>
        <end position="840"/>
    </location>
</feature>
<feature type="domain" description="Mononegavirus-type SAM-dependent 2'-O-MTase" evidence="6">
    <location>
        <begin position="1771"/>
        <end position="1978"/>
    </location>
</feature>
<feature type="region of interest" description="Oligomerization domain" evidence="1">
    <location>
        <begin position="1"/>
        <end position="174"/>
    </location>
</feature>
<feature type="region of interest" description="Disordered" evidence="7">
    <location>
        <begin position="607"/>
        <end position="633"/>
    </location>
</feature>
<feature type="region of interest" description="Involved in mRNA cap methylation" evidence="1">
    <location>
        <begin position="1756"/>
        <end position="2228"/>
    </location>
</feature>
<feature type="compositionally biased region" description="Basic and acidic residues" evidence="7">
    <location>
        <begin position="616"/>
        <end position="625"/>
    </location>
</feature>
<feature type="binding site" evidence="4">
    <location>
        <begin position="1801"/>
        <end position="1810"/>
    </location>
    <ligand>
        <name>ATP</name>
        <dbReference type="ChEBI" id="CHEBI:30616"/>
    </ligand>
</feature>
<feature type="sequence variant" description="In avirulent isolate MVC11.">
    <original>E</original>
    <variation>A</variation>
    <location>
        <position position="2050"/>
    </location>
</feature>
<sequence length="2228" mass="253061">MDGQESTQNPSDILYPECHLNSPIVRGKIAQLHVLLDVNQPYILKDDSIINITKHKIRNGGLSLRQIKIRSLGKALQRTIKDLDRYTFEPYPTYSQELLRLDIPEICDKIRSVFAVSDRLTKELSNGFQDLWLNIFKQLGNIEGREGYDPLQDISTIPEITERYSRNKWYRPFLTWFSIKYDMRWMQKTRPGGPLDTSNSHNLLECKSYTLVTYGDLVMILNKSTLTGYILTPELVLMYCDVVEGRWNMSAAGQLDKRSTGITSKGEELWELVDSLFSSLGEEIYNVIALLEPLSLALIQLSDPVIPLRGAFMRHVLTELQTVLTSKDVYTDPEADAIVESLLAIFHGTSIDEKAEIFSFFRTFGHPSLEAVTAADKVRAHMYAQKAIKLKTLHECHAVFCTIIINGYRERHGGQWPPCDFPDHVCLELRNAQGSNTAISYECAVDNYTSFIGFKFRKFIEPQLDEDLTIYMKDKALSPRKEAWDSVYPDSNLYYKVPESEETRRLIEVFINDENFNPEDIIDYVESGDWLKDEKFNISYSLKEKEIKQEGRLFAKMTYKMRAVQVLAETLLAKGIGELFSENGMVKGEIDLLKRLTTLSVSGVPRTDSVYNNPRSSEKRNESMKKRNSKGYWDEKKRSRHEFKATDSSTDGYETLSCFLTTDLKKYCLNWRFESTALFGQRCNEIFGFKTFFNWMHPVLEKCTIYVGDPYCPVADRMHRQLQDHADSGIFIHNPRGGIEGYCQKLWTLISISAIHLAAVRVGVRVSAMVQGDNQAIAVTSRVPVAQTYKQKKNHVYEEITRYFGALRHVMFDIGHELKLNETIISSKMFVYSKRIYYDGKILPQCLKALTRCVFWSETLVDENRSACSNISTSIAKAIENGYSPILGYCIALYKTCQQVCISLGMTINPTISPTVRDQYFKGKNWLRCAVLIPANVGGFNYMSTSRCFVRNIGDPAVAALADLKRFIRADLLDKQVLYRVMNQEPGDSSFLDWASDPYSCNLPHSQSITTIIKNITARSVLQESPNPLLSGLFTETSGEEDLNLASFLMDRKVILPRVAHEILSNSLTGVREAIAGMLDTTKSLVRASVKRGGLSYGILRRLVNYDLLQYETLTRTLRKPVKDNIEYEYMCSVELAVGLRQKMWIHLTYGRPIHGLETPDPLELLRGTFIEGSEVCKLCRSEGADPIYTWFYLPDNIDLDTLTNGSPAIRIPYFGSATDERSEAQLGYVRNLSKPAKAAIRIAMVYTWAYGTDEISWMEAALIAQTRANLSLENLKLLTPVSTSTNLSHRLKDTATQMKFSSATLVRASRFITISNDNMALKEAGESKDTNLVYQQIMLTGLSLFEFNMRYKKGSLEKPLILHLHLNNGCCIMESPQEANIPPRSTLDLEITQENNKLIYDPDPLRDVDLELFSKVRDVVHTVDMTYWSDDEVIRATSICTAMTIADTMSQLDRDNLKEMIALVNDDDVNSLITEFMVIDVPLFCSTFGGILVNQFAYSLYGLNIRGREEIWGHVVRILKDTSHAVLKVLSNALSHPKIFKRFWNAGVVEPVYGPNLSNQDKTLLALSVCEYSVDLFMHDWQGGVPLEVFICDNDPDVADMRRSSFLARHLAYLCSLAEISRDGPRLESMNSLERLETLKSYLELTFLDDPVLRYSQLTGLVIKVFPSTLTYIRKSSIKVLRTRGIGVPEVLEDWDPEADNALLDGIAAEIQQNIPLGHQTRAPFWGLRVSKSQVLRLRGYEEITRGEVGRSGVGLTLPFDGRYLSHQLRLFGVNSTSCLKALELTYLLSPLVDKDKDRLFLGEGAGAMLSCYDATLGPCINYYNSGVYSCDVNGQRELNIYPAEVALVGKKLNNVTSLGQRVKVLFNGNPGSTWIGNDECEALIWNELQNNSIGLVHCDMEGGDHKDDQVVLHEHYSVIRIAYLVGDRDVVLISKIAPRLGTDWTRQLSLYLRYWDEVNLVVLKTSNPASTEMYLLSRHPKSDIIEDSKTVLASLHPLSKEDSIKIEKWILIEKAKAHEWVTRELREGSSSSGMLRPYHQALQTFGFEPNLYKLSRDFLSTMNIADTHNCMTAFNRVLKDTIFEWARITESDKRLKLTGKYDLYPVRDSGKLKTISRRLVLSWVSLSMSTRLVTGSFPDQKFEARLQLGIVSLSSREIRNLRVITKTILDRFENTIHSITYRFLTKEVKILMKILGAVKMFGARQNEYTTVVDDGSLDDIEPYDSL</sequence>
<proteinExistence type="inferred from homology"/>
<name>L_SENDO</name>
<evidence type="ECO:0000250" key="1"/>
<evidence type="ECO:0000250" key="2">
    <source>
        <dbReference type="UniProtKB" id="P03523"/>
    </source>
</evidence>
<evidence type="ECO:0000250" key="3">
    <source>
        <dbReference type="UniProtKB" id="P28887"/>
    </source>
</evidence>
<evidence type="ECO:0000255" key="4"/>
<evidence type="ECO:0000255" key="5">
    <source>
        <dbReference type="PROSITE-ProRule" id="PRU00539"/>
    </source>
</evidence>
<evidence type="ECO:0000255" key="6">
    <source>
        <dbReference type="PROSITE-ProRule" id="PRU00923"/>
    </source>
</evidence>
<evidence type="ECO:0000256" key="7">
    <source>
        <dbReference type="SAM" id="MobiDB-lite"/>
    </source>
</evidence>
<evidence type="ECO:0000305" key="8"/>
<organism>
    <name type="scientific">Sendai virus (strain Ohita)</name>
    <name type="common">SeV</name>
    <dbReference type="NCBI Taxonomy" id="302272"/>
    <lineage>
        <taxon>Viruses</taxon>
        <taxon>Riboviria</taxon>
        <taxon>Orthornavirae</taxon>
        <taxon>Negarnaviricota</taxon>
        <taxon>Haploviricotina</taxon>
        <taxon>Monjiviricetes</taxon>
        <taxon>Mononegavirales</taxon>
        <taxon>Paramyxoviridae</taxon>
        <taxon>Feraresvirinae</taxon>
        <taxon>Respirovirus</taxon>
        <taxon>Respirovirus muris</taxon>
    </lineage>
</organism>
<comment type="function">
    <text evidence="2">RNA-directed RNA polymerase that catalyzes the transcription of viral mRNAs, their capping and polyadenylation. The template is composed of the viral RNA tightly encapsidated by the nucleoprotein (N). The viral polymerase binds to the genomic RNA at the 3' leader promoter, and transcribes subsequently all viral mRNAs with a decreasing efficiency. The first gene is the most transcribed, and the last the least transcribed. The viral phosphoprotein acts as a processivity factor. Capping is concomitant with initiation of mRNA transcription. Indeed, a GDP polyribonucleotidyl transferase (PRNTase) adds the cap structure when the nascent RNA chain length has reached few nucleotides. Ribose 2'-O methylation of viral mRNA cap precedes and facilitates subsequent guanine-N-7 methylation, both activities being carried by the viral polymerase. Polyadenylation of mRNAs occur by a stuttering mechanism at a slipery stop site present at the end viral genes. After finishing transcription of a mRNA, the polymerase can resume transcription of the downstream gene.</text>
</comment>
<comment type="function">
    <text evidence="2">RNA-directed RNA polymerase that catalyzes the replication of viral genomic RNA. The template is composed of the viral RNA tightly encapsidated by the nucleoprotein (N). The replicase mode is dependent on intracellular N protein concentration. In this mode, the polymerase replicates the whole viral genome without recognizing transcriptional signals, and the replicated genome is not caped or polyadenylated.</text>
</comment>
<comment type="catalytic activity">
    <reaction evidence="5">
        <text>RNA(n) + a ribonucleoside 5'-triphosphate = RNA(n+1) + diphosphate</text>
        <dbReference type="Rhea" id="RHEA:21248"/>
        <dbReference type="Rhea" id="RHEA-COMP:14527"/>
        <dbReference type="Rhea" id="RHEA-COMP:17342"/>
        <dbReference type="ChEBI" id="CHEBI:33019"/>
        <dbReference type="ChEBI" id="CHEBI:61557"/>
        <dbReference type="ChEBI" id="CHEBI:140395"/>
        <dbReference type="EC" id="2.7.7.48"/>
    </reaction>
</comment>
<comment type="catalytic activity">
    <reaction evidence="2">
        <text>a 5'-end (5'-triphosphoguanosine)-adenylyl-adenylyl-cytidylyl-adenosine in mRNA + 2 S-adenosyl-L-methionine = a 5'-end (N(7)-methyl 5'-triphosphoguanosine)-(2'-O-methyladenylyl)-adenylyl-cytidylyl-adenosine in mRNA + 2 S-adenosyl-L-homocysteine + H(+)</text>
        <dbReference type="Rhea" id="RHEA:65376"/>
        <dbReference type="Rhea" id="RHEA-COMP:16797"/>
        <dbReference type="Rhea" id="RHEA-COMP:16798"/>
        <dbReference type="ChEBI" id="CHEBI:15378"/>
        <dbReference type="ChEBI" id="CHEBI:57856"/>
        <dbReference type="ChEBI" id="CHEBI:59789"/>
        <dbReference type="ChEBI" id="CHEBI:156483"/>
        <dbReference type="ChEBI" id="CHEBI:156484"/>
        <dbReference type="EC" id="2.1.1.375"/>
    </reaction>
</comment>
<comment type="catalytic activity">
    <reaction evidence="2">
        <text>a 5'-end (5'-triphosphoguanosine)-adenylyl-adenylyl-cytidylyl-adenosine in mRNA + S-adenosyl-L-methionine = a 5'-end (5'-triphosphoguanosine)-(2'-O-methyladenylyl)-adenylyl-cytidylyl-adenosine in mRNA + S-adenosyl-L-homocysteine + H(+)</text>
        <dbReference type="Rhea" id="RHEA:65380"/>
        <dbReference type="Rhea" id="RHEA-COMP:16797"/>
        <dbReference type="Rhea" id="RHEA-COMP:16801"/>
        <dbReference type="ChEBI" id="CHEBI:15378"/>
        <dbReference type="ChEBI" id="CHEBI:57856"/>
        <dbReference type="ChEBI" id="CHEBI:59789"/>
        <dbReference type="ChEBI" id="CHEBI:156482"/>
        <dbReference type="ChEBI" id="CHEBI:156484"/>
    </reaction>
</comment>
<comment type="catalytic activity">
    <reaction evidence="3">
        <text>a 5'-end triphospho-adenylyl-adenylyl-cytidylyl-adenosine in mRNA + GDP + H(+) = a 5'-end (5'-triphosphoguanosine)-adenylyl-adenylyl-cytidylyl-adenosine in mRNA + diphosphate</text>
        <dbReference type="Rhea" id="RHEA:65436"/>
        <dbReference type="Rhea" id="RHEA-COMP:16797"/>
        <dbReference type="Rhea" id="RHEA-COMP:16799"/>
        <dbReference type="ChEBI" id="CHEBI:15378"/>
        <dbReference type="ChEBI" id="CHEBI:33019"/>
        <dbReference type="ChEBI" id="CHEBI:58189"/>
        <dbReference type="ChEBI" id="CHEBI:156484"/>
        <dbReference type="ChEBI" id="CHEBI:156503"/>
        <dbReference type="EC" id="2.7.7.88"/>
    </reaction>
</comment>
<comment type="catalytic activity">
    <reaction evidence="2">
        <text>a 5'-end (5'-triphosphoguanosine)-(2'-O-methyladenylyl)-adenylyl-cytidylyl-adenosine in mRNA + S-adenosyl-L-methionine = a 5'-end (N(7)-methyl 5'-triphosphoguanosine)-(2'-O-methyladenylyl)-adenylyl-cytidylyl-adenosine in mRNA + S-adenosyl-L-homocysteine</text>
        <dbReference type="Rhea" id="RHEA:65440"/>
        <dbReference type="Rhea" id="RHEA-COMP:16798"/>
        <dbReference type="Rhea" id="RHEA-COMP:16801"/>
        <dbReference type="ChEBI" id="CHEBI:57856"/>
        <dbReference type="ChEBI" id="CHEBI:59789"/>
        <dbReference type="ChEBI" id="CHEBI:156482"/>
        <dbReference type="ChEBI" id="CHEBI:156483"/>
    </reaction>
</comment>
<comment type="catalytic activity">
    <reaction evidence="3">
        <text>GTP + H2O = GDP + phosphate + H(+)</text>
        <dbReference type="Rhea" id="RHEA:19669"/>
        <dbReference type="ChEBI" id="CHEBI:15377"/>
        <dbReference type="ChEBI" id="CHEBI:15378"/>
        <dbReference type="ChEBI" id="CHEBI:37565"/>
        <dbReference type="ChEBI" id="CHEBI:43474"/>
        <dbReference type="ChEBI" id="CHEBI:58189"/>
    </reaction>
</comment>
<comment type="subunit">
    <text evidence="1">Homooligomer. Interacts with the P and C proteins. The L protein complexes with P protein to form the functional polymerase. C protein binding to L has an inhibitory effect (By similarity).</text>
</comment>
<comment type="subcellular location">
    <subcellularLocation>
        <location evidence="8">Virion</location>
    </subcellularLocation>
    <subcellularLocation>
        <location evidence="1">Host cytoplasm</location>
    </subcellularLocation>
</comment>
<comment type="domain">
    <text evidence="1">The N-terminal part (about 1-400) seems to be involved in binding to the P protein.</text>
</comment>
<comment type="miscellaneous">
    <text evidence="1">Least abundant structural protein (approximately 50 copies per virion). Unstable in the absence of P protein (By similarity).</text>
</comment>
<comment type="similarity">
    <text evidence="8">Belongs to the paramyxovirus L protein family.</text>
</comment>
<organismHost>
    <name type="scientific">Cavia cutleri</name>
    <name type="common">Guinea pig</name>
    <dbReference type="NCBI Taxonomy" id="10144"/>
</organismHost>
<organismHost>
    <name type="scientific">Cricetidae sp.</name>
    <name type="common">Hamster</name>
    <dbReference type="NCBI Taxonomy" id="36483"/>
</organismHost>
<organismHost>
    <name type="scientific">Mus musculus</name>
    <name type="common">Mouse</name>
    <dbReference type="NCBI Taxonomy" id="10090"/>
</organismHost>
<organismHost>
    <name type="scientific">Rattus norvegicus</name>
    <name type="common">Rat</name>
    <dbReference type="NCBI Taxonomy" id="10116"/>
</organismHost>
<gene>
    <name type="primary">L</name>
</gene>